<sequence>MSWLRSSPLRQSFSKSGNNSNSNGGGSANDRSRSGAGGGGLSSVIRPFDATECDPKACYDSFCIHWQQAYEIIQRSESHDDVLGVVTHLDHMVTLLLVELHHCNKLSLPGQPTPPAPCLEHLLSENLLDKLYEWGIKTGRYANAVRLEQLKLYEQLVSHSRHQLLVHEPFLRPLLKLLASSQNEIYPPDVEKRLVILLNQLCVVLMQNVHLLDLFFFSTTQTQQSHHASNGGHTNFIIFSLLIPYVHREGSLGHQARDALLLCMALSQKNSNVGTYIATYSSICPVLVTGLGGLYSRLPNQIEIKTVDWYRITTDDVTELPELTLFMNSLEFCNAVVQVAHTMIRQQLLDFLYQGFLVPVLGPAILQTNVESQVSAMAYFDLIVRSITEPGLIQIVIRFLLDEEKFDGQRILDVLVERLNSNDSRLCMVTLSLFDSLLSLNCEDIMLELMLKYLLHCKHVPISHRYKINRVDPYTQAVEYFLNITPDIMKKVNSVLSINNGGLASNGASSAAAGQPAVVATAKTIGANWNHYGLNTTTGETLLANYQAYLLDARNRIVQCKHACDQWNNVYRYQKLSKANFTGAPNVAANGAGSSGQNSLVNPEDVRALKQLDSLQSIGDSSGYESLNVFSQTSNDLVAPGTMPQEPQLKQQQQRIDAWKVSSVREEPIGDLDLSEDLFAQGTVSLGPFLTAIWGKLQTFTSNCLYVNLHLTGLITHLTLFPLPLLHSILLRPDIPTTSDTPSFHQVLKILKQQIDAELPDTDESLEIVDMARSFLVDREFRLVNMRKNAIESAASGKLLNGGGSSMTSSLSQTTPMQLTPSSSYDPFKRQDGKRKSISNSFSNIFRRPGSVGKNPPSFPSRSSNSNGLNHSPNGRQQPQSYTPASMNVPSPVGQQQHQHQSVSSVMPPSGLLIGSSRRESREAETQFMSIDTSSLQAGGINAPSGHVSNGSNGNDLLHPHSLEHGLTSYSVGSERQLNLAIGAVLLDEWLRELSAVTQEQCIMMLSEQVQQQQQQPPARTAS</sequence>
<accession>Q7PZ36</accession>
<dbReference type="EMBL" id="AAAB01008986">
    <property type="protein sequence ID" value="EAA00076.3"/>
    <property type="status" value="ALT_SEQ"/>
    <property type="molecule type" value="Genomic_DNA"/>
</dbReference>
<dbReference type="RefSeq" id="XP_320805.3">
    <property type="nucleotide sequence ID" value="XM_320805.3"/>
</dbReference>
<dbReference type="SMR" id="Q7PZ36"/>
<dbReference type="FunCoup" id="Q7PZ36">
    <property type="interactions" value="67"/>
</dbReference>
<dbReference type="STRING" id="7165.Q7PZ36"/>
<dbReference type="PaxDb" id="7165-AGAP011705-PA"/>
<dbReference type="VEuPathDB" id="VectorBase:AGAMI1_000354"/>
<dbReference type="VEuPathDB" id="VectorBase:AGAP011705"/>
<dbReference type="eggNOG" id="KOG3695">
    <property type="taxonomic scope" value="Eukaryota"/>
</dbReference>
<dbReference type="HOGENOM" id="CLU_007807_0_0_1"/>
<dbReference type="InParanoid" id="Q7PZ36"/>
<dbReference type="Proteomes" id="UP000007062">
    <property type="component" value="Chromosome 3L"/>
</dbReference>
<dbReference type="InterPro" id="IPR019384">
    <property type="entry name" value="FHIP"/>
</dbReference>
<dbReference type="InterPro" id="IPR045669">
    <property type="entry name" value="FHIP_C"/>
</dbReference>
<dbReference type="InterPro" id="IPR045668">
    <property type="entry name" value="FHIP_KELAA_motif"/>
</dbReference>
<dbReference type="PANTHER" id="PTHR21705:SF11">
    <property type="entry name" value="FHIP FAMILY PROTEIN CG3558"/>
    <property type="match status" value="1"/>
</dbReference>
<dbReference type="PANTHER" id="PTHR21705">
    <property type="entry name" value="RAI16 PROTEIN-RELATED"/>
    <property type="match status" value="1"/>
</dbReference>
<dbReference type="Pfam" id="PF19314">
    <property type="entry name" value="DUF5917"/>
    <property type="match status" value="1"/>
</dbReference>
<dbReference type="Pfam" id="PF19311">
    <property type="entry name" value="KELAA"/>
    <property type="match status" value="1"/>
</dbReference>
<dbReference type="Pfam" id="PF10257">
    <property type="entry name" value="RAI16-like"/>
    <property type="match status" value="1"/>
</dbReference>
<gene>
    <name type="ORF">AGAP011705</name>
</gene>
<protein>
    <recommendedName>
        <fullName>FHIP family protein AGAP011705</fullName>
    </recommendedName>
</protein>
<name>U518_ANOGA</name>
<proteinExistence type="inferred from homology"/>
<reference key="1">
    <citation type="journal article" date="2002" name="Science">
        <title>The genome sequence of the malaria mosquito Anopheles gambiae.</title>
        <authorList>
            <person name="Holt R.A."/>
            <person name="Subramanian G.M."/>
            <person name="Halpern A."/>
            <person name="Sutton G.G."/>
            <person name="Charlab R."/>
            <person name="Nusskern D.R."/>
            <person name="Wincker P."/>
            <person name="Clark A.G."/>
            <person name="Ribeiro J.M.C."/>
            <person name="Wides R."/>
            <person name="Salzberg S.L."/>
            <person name="Loftus B.J."/>
            <person name="Yandell M.D."/>
            <person name="Majoros W.H."/>
            <person name="Rusch D.B."/>
            <person name="Lai Z."/>
            <person name="Kraft C.L."/>
            <person name="Abril J.F."/>
            <person name="Anthouard V."/>
            <person name="Arensburger P."/>
            <person name="Atkinson P.W."/>
            <person name="Baden H."/>
            <person name="de Berardinis V."/>
            <person name="Baldwin D."/>
            <person name="Benes V."/>
            <person name="Biedler J."/>
            <person name="Blass C."/>
            <person name="Bolanos R."/>
            <person name="Boscus D."/>
            <person name="Barnstead M."/>
            <person name="Cai S."/>
            <person name="Center A."/>
            <person name="Chaturverdi K."/>
            <person name="Christophides G.K."/>
            <person name="Chrystal M.A.M."/>
            <person name="Clamp M."/>
            <person name="Cravchik A."/>
            <person name="Curwen V."/>
            <person name="Dana A."/>
            <person name="Delcher A."/>
            <person name="Dew I."/>
            <person name="Evans C.A."/>
            <person name="Flanigan M."/>
            <person name="Grundschober-Freimoser A."/>
            <person name="Friedli L."/>
            <person name="Gu Z."/>
            <person name="Guan P."/>
            <person name="Guigo R."/>
            <person name="Hillenmeyer M.E."/>
            <person name="Hladun S.L."/>
            <person name="Hogan J.R."/>
            <person name="Hong Y.S."/>
            <person name="Hoover J."/>
            <person name="Jaillon O."/>
            <person name="Ke Z."/>
            <person name="Kodira C.D."/>
            <person name="Kokoza E."/>
            <person name="Koutsos A."/>
            <person name="Letunic I."/>
            <person name="Levitsky A.A."/>
            <person name="Liang Y."/>
            <person name="Lin J.-J."/>
            <person name="Lobo N.F."/>
            <person name="Lopez J.R."/>
            <person name="Malek J.A."/>
            <person name="McIntosh T.C."/>
            <person name="Meister S."/>
            <person name="Miller J.R."/>
            <person name="Mobarry C."/>
            <person name="Mongin E."/>
            <person name="Murphy S.D."/>
            <person name="O'Brochta D.A."/>
            <person name="Pfannkoch C."/>
            <person name="Qi R."/>
            <person name="Regier M.A."/>
            <person name="Remington K."/>
            <person name="Shao H."/>
            <person name="Sharakhova M.V."/>
            <person name="Sitter C.D."/>
            <person name="Shetty J."/>
            <person name="Smith T.J."/>
            <person name="Strong R."/>
            <person name="Sun J."/>
            <person name="Thomasova D."/>
            <person name="Ton L.Q."/>
            <person name="Topalis P."/>
            <person name="Tu Z.J."/>
            <person name="Unger M.F."/>
            <person name="Walenz B."/>
            <person name="Wang A.H."/>
            <person name="Wang J."/>
            <person name="Wang M."/>
            <person name="Wang X."/>
            <person name="Woodford K.J."/>
            <person name="Wortman J.R."/>
            <person name="Wu M."/>
            <person name="Yao A."/>
            <person name="Zdobnov E.M."/>
            <person name="Zhang H."/>
            <person name="Zhao Q."/>
            <person name="Zhao S."/>
            <person name="Zhu S.C."/>
            <person name="Zhimulev I."/>
            <person name="Coluzzi M."/>
            <person name="della Torre A."/>
            <person name="Roth C.W."/>
            <person name="Louis C."/>
            <person name="Kalush F."/>
            <person name="Mural R.J."/>
            <person name="Myers E.W."/>
            <person name="Adams M.D."/>
            <person name="Smith H.O."/>
            <person name="Broder S."/>
            <person name="Gardner M.J."/>
            <person name="Fraser C.M."/>
            <person name="Birney E."/>
            <person name="Bork P."/>
            <person name="Brey P.T."/>
            <person name="Venter J.C."/>
            <person name="Weissenbach J."/>
            <person name="Kafatos F.C."/>
            <person name="Collins F.H."/>
            <person name="Hoffman S.L."/>
        </authorList>
    </citation>
    <scope>NUCLEOTIDE SEQUENCE [LARGE SCALE GENOMIC DNA]</scope>
    <source>
        <strain>PEST</strain>
    </source>
</reference>
<comment type="similarity">
    <text evidence="2">Belongs to the FHIP family.</text>
</comment>
<comment type="sequence caution" evidence="2">
    <conflict type="erroneous gene model prediction">
        <sequence resource="EMBL-CDS" id="EAA00076"/>
    </conflict>
</comment>
<feature type="chain" id="PRO_0000379005" description="FHIP family protein AGAP011705">
    <location>
        <begin position="1"/>
        <end position="1023"/>
    </location>
</feature>
<feature type="region of interest" description="Disordered" evidence="1">
    <location>
        <begin position="1"/>
        <end position="39"/>
    </location>
</feature>
<feature type="region of interest" description="Disordered" evidence="1">
    <location>
        <begin position="797"/>
        <end position="927"/>
    </location>
</feature>
<feature type="compositionally biased region" description="Polar residues" evidence="1">
    <location>
        <begin position="1"/>
        <end position="13"/>
    </location>
</feature>
<feature type="compositionally biased region" description="Polar residues" evidence="1">
    <location>
        <begin position="806"/>
        <end position="825"/>
    </location>
</feature>
<feature type="compositionally biased region" description="Polar residues" evidence="1">
    <location>
        <begin position="868"/>
        <end position="888"/>
    </location>
</feature>
<feature type="compositionally biased region" description="Low complexity" evidence="1">
    <location>
        <begin position="889"/>
        <end position="906"/>
    </location>
</feature>
<keyword id="KW-1185">Reference proteome</keyword>
<organism>
    <name type="scientific">Anopheles gambiae</name>
    <name type="common">African malaria mosquito</name>
    <dbReference type="NCBI Taxonomy" id="7165"/>
    <lineage>
        <taxon>Eukaryota</taxon>
        <taxon>Metazoa</taxon>
        <taxon>Ecdysozoa</taxon>
        <taxon>Arthropoda</taxon>
        <taxon>Hexapoda</taxon>
        <taxon>Insecta</taxon>
        <taxon>Pterygota</taxon>
        <taxon>Neoptera</taxon>
        <taxon>Endopterygota</taxon>
        <taxon>Diptera</taxon>
        <taxon>Nematocera</taxon>
        <taxon>Culicoidea</taxon>
        <taxon>Culicidae</taxon>
        <taxon>Anophelinae</taxon>
        <taxon>Anopheles</taxon>
    </lineage>
</organism>
<evidence type="ECO:0000256" key="1">
    <source>
        <dbReference type="SAM" id="MobiDB-lite"/>
    </source>
</evidence>
<evidence type="ECO:0000305" key="2"/>